<name>CSRA_VIBVU</name>
<accession>Q8DC47</accession>
<evidence type="ECO:0000255" key="1">
    <source>
        <dbReference type="HAMAP-Rule" id="MF_00167"/>
    </source>
</evidence>
<comment type="function">
    <text evidence="1">A key translational regulator that binds mRNA to regulate translation initiation and/or mRNA stability. Mediates global changes in gene expression, shifting from rapid growth to stress survival by linking envelope stress, the stringent response and the catabolite repression systems. Usually binds in the 5'-UTR; binding at or near the Shine-Dalgarno sequence prevents ribosome-binding, repressing translation, binding elsewhere in the 5'-UTR can activate translation and/or stabilize the mRNA. Its function is antagonized by small RNA(s).</text>
</comment>
<comment type="subunit">
    <text evidence="1">Homodimer; the beta-strands of each monomer intercalate to form a hydrophobic core, while the alpha-helices form wings that extend away from the core.</text>
</comment>
<comment type="subcellular location">
    <subcellularLocation>
        <location evidence="1">Cytoplasm</location>
    </subcellularLocation>
</comment>
<comment type="similarity">
    <text evidence="1">Belongs to the CsrA/RsmA family.</text>
</comment>
<organism>
    <name type="scientific">Vibrio vulnificus (strain CMCP6)</name>
    <dbReference type="NCBI Taxonomy" id="216895"/>
    <lineage>
        <taxon>Bacteria</taxon>
        <taxon>Pseudomonadati</taxon>
        <taxon>Pseudomonadota</taxon>
        <taxon>Gammaproteobacteria</taxon>
        <taxon>Vibrionales</taxon>
        <taxon>Vibrionaceae</taxon>
        <taxon>Vibrio</taxon>
    </lineage>
</organism>
<reference key="1">
    <citation type="submission" date="2002-12" db="EMBL/GenBank/DDBJ databases">
        <title>Complete genome sequence of Vibrio vulnificus CMCP6.</title>
        <authorList>
            <person name="Rhee J.H."/>
            <person name="Kim S.Y."/>
            <person name="Chung S.S."/>
            <person name="Kim J.J."/>
            <person name="Moon Y.H."/>
            <person name="Jeong H."/>
            <person name="Choy H.E."/>
        </authorList>
    </citation>
    <scope>NUCLEOTIDE SEQUENCE [LARGE SCALE GENOMIC DNA]</scope>
    <source>
        <strain>CMCP6</strain>
    </source>
</reference>
<keyword id="KW-0010">Activator</keyword>
<keyword id="KW-0963">Cytoplasm</keyword>
<keyword id="KW-0678">Repressor</keyword>
<keyword id="KW-0694">RNA-binding</keyword>
<keyword id="KW-0810">Translation regulation</keyword>
<dbReference type="EMBL" id="AE016795">
    <property type="protein sequence ID" value="AAO10018.1"/>
    <property type="molecule type" value="Genomic_DNA"/>
</dbReference>
<dbReference type="RefSeq" id="WP_011079528.1">
    <property type="nucleotide sequence ID" value="NC_004459.3"/>
</dbReference>
<dbReference type="SMR" id="Q8DC47"/>
<dbReference type="GeneID" id="93895851"/>
<dbReference type="KEGG" id="vvu:VV1_1595"/>
<dbReference type="HOGENOM" id="CLU_164837_2_1_6"/>
<dbReference type="Proteomes" id="UP000002275">
    <property type="component" value="Chromosome 1"/>
</dbReference>
<dbReference type="GO" id="GO:0005829">
    <property type="term" value="C:cytosol"/>
    <property type="evidence" value="ECO:0007669"/>
    <property type="project" value="TreeGrafter"/>
</dbReference>
<dbReference type="GO" id="GO:0048027">
    <property type="term" value="F:mRNA 5'-UTR binding"/>
    <property type="evidence" value="ECO:0007669"/>
    <property type="project" value="UniProtKB-UniRule"/>
</dbReference>
<dbReference type="GO" id="GO:0006402">
    <property type="term" value="P:mRNA catabolic process"/>
    <property type="evidence" value="ECO:0007669"/>
    <property type="project" value="InterPro"/>
</dbReference>
<dbReference type="GO" id="GO:0045947">
    <property type="term" value="P:negative regulation of translational initiation"/>
    <property type="evidence" value="ECO:0007669"/>
    <property type="project" value="UniProtKB-UniRule"/>
</dbReference>
<dbReference type="GO" id="GO:0045948">
    <property type="term" value="P:positive regulation of translational initiation"/>
    <property type="evidence" value="ECO:0007669"/>
    <property type="project" value="UniProtKB-UniRule"/>
</dbReference>
<dbReference type="GO" id="GO:0006109">
    <property type="term" value="P:regulation of carbohydrate metabolic process"/>
    <property type="evidence" value="ECO:0007669"/>
    <property type="project" value="UniProtKB-UniRule"/>
</dbReference>
<dbReference type="FunFam" id="2.60.40.4380:FF:000001">
    <property type="entry name" value="Translational regulator CsrA"/>
    <property type="match status" value="1"/>
</dbReference>
<dbReference type="Gene3D" id="2.60.40.4380">
    <property type="entry name" value="Translational regulator CsrA"/>
    <property type="match status" value="1"/>
</dbReference>
<dbReference type="HAMAP" id="MF_00167">
    <property type="entry name" value="CsrA"/>
    <property type="match status" value="1"/>
</dbReference>
<dbReference type="InterPro" id="IPR003751">
    <property type="entry name" value="CsrA"/>
</dbReference>
<dbReference type="InterPro" id="IPR036107">
    <property type="entry name" value="CsrA_sf"/>
</dbReference>
<dbReference type="NCBIfam" id="TIGR00202">
    <property type="entry name" value="csrA"/>
    <property type="match status" value="1"/>
</dbReference>
<dbReference type="NCBIfam" id="NF002469">
    <property type="entry name" value="PRK01712.1"/>
    <property type="match status" value="1"/>
</dbReference>
<dbReference type="PANTHER" id="PTHR34984">
    <property type="entry name" value="CARBON STORAGE REGULATOR"/>
    <property type="match status" value="1"/>
</dbReference>
<dbReference type="PANTHER" id="PTHR34984:SF1">
    <property type="entry name" value="CARBON STORAGE REGULATOR"/>
    <property type="match status" value="1"/>
</dbReference>
<dbReference type="Pfam" id="PF02599">
    <property type="entry name" value="CsrA"/>
    <property type="match status" value="1"/>
</dbReference>
<dbReference type="SUPFAM" id="SSF117130">
    <property type="entry name" value="CsrA-like"/>
    <property type="match status" value="1"/>
</dbReference>
<proteinExistence type="inferred from homology"/>
<gene>
    <name evidence="1" type="primary">csrA</name>
    <name type="ordered locus">VV1_1595</name>
</gene>
<protein>
    <recommendedName>
        <fullName evidence="1">Translational regulator CsrA</fullName>
    </recommendedName>
    <alternativeName>
        <fullName evidence="1">Carbon storage regulator</fullName>
    </alternativeName>
</protein>
<sequence>MLILTRRVGETLMIGDEVTVTVLGVKGNQVRIGVNAPKDVSVHREEIYMRIQAEKGNVTPGNY</sequence>
<feature type="chain" id="PRO_0000177097" description="Translational regulator CsrA">
    <location>
        <begin position="1"/>
        <end position="63"/>
    </location>
</feature>